<evidence type="ECO:0000255" key="1">
    <source>
        <dbReference type="HAMAP-Rule" id="MF_00366"/>
    </source>
</evidence>
<keyword id="KW-0002">3D-structure</keyword>
<keyword id="KW-0240">DNA-directed RNA polymerase</keyword>
<keyword id="KW-0548">Nucleotidyltransferase</keyword>
<keyword id="KW-1185">Reference proteome</keyword>
<keyword id="KW-0804">Transcription</keyword>
<keyword id="KW-0808">Transferase</keyword>
<dbReference type="EC" id="2.7.7.6" evidence="1"/>
<dbReference type="EMBL" id="CP001340">
    <property type="protein sequence ID" value="ACL95086.1"/>
    <property type="molecule type" value="Genomic_DNA"/>
</dbReference>
<dbReference type="RefSeq" id="WP_010919426.1">
    <property type="nucleotide sequence ID" value="NC_011916.1"/>
</dbReference>
<dbReference type="RefSeq" id="YP_002516994.1">
    <property type="nucleotide sequence ID" value="NC_011916.1"/>
</dbReference>
<dbReference type="PDB" id="7YE1">
    <property type="method" value="EM"/>
    <property type="resolution" value="3.70 A"/>
    <property type="chains" value="E=1-119"/>
</dbReference>
<dbReference type="PDB" id="7YE2">
    <property type="method" value="EM"/>
    <property type="resolution" value="3.80 A"/>
    <property type="chains" value="E=1-119"/>
</dbReference>
<dbReference type="PDBsum" id="7YE1"/>
<dbReference type="PDBsum" id="7YE2"/>
<dbReference type="EMDB" id="EMD-33761"/>
<dbReference type="EMDB" id="EMD-33762"/>
<dbReference type="SMR" id="B8H618"/>
<dbReference type="GeneID" id="7331599"/>
<dbReference type="KEGG" id="ccs:CCNA_01621"/>
<dbReference type="PATRIC" id="fig|565050.3.peg.1599"/>
<dbReference type="HOGENOM" id="CLU_125406_2_0_5"/>
<dbReference type="OrthoDB" id="9796300at2"/>
<dbReference type="PhylomeDB" id="B8H618"/>
<dbReference type="Proteomes" id="UP000001364">
    <property type="component" value="Chromosome"/>
</dbReference>
<dbReference type="GO" id="GO:0000428">
    <property type="term" value="C:DNA-directed RNA polymerase complex"/>
    <property type="evidence" value="ECO:0007669"/>
    <property type="project" value="UniProtKB-KW"/>
</dbReference>
<dbReference type="GO" id="GO:0003677">
    <property type="term" value="F:DNA binding"/>
    <property type="evidence" value="ECO:0007669"/>
    <property type="project" value="UniProtKB-UniRule"/>
</dbReference>
<dbReference type="GO" id="GO:0003899">
    <property type="term" value="F:DNA-directed RNA polymerase activity"/>
    <property type="evidence" value="ECO:0007669"/>
    <property type="project" value="UniProtKB-UniRule"/>
</dbReference>
<dbReference type="GO" id="GO:0006351">
    <property type="term" value="P:DNA-templated transcription"/>
    <property type="evidence" value="ECO:0007669"/>
    <property type="project" value="UniProtKB-UniRule"/>
</dbReference>
<dbReference type="Gene3D" id="3.90.940.10">
    <property type="match status" value="1"/>
</dbReference>
<dbReference type="HAMAP" id="MF_00366">
    <property type="entry name" value="RNApol_bact_RpoZ"/>
    <property type="match status" value="1"/>
</dbReference>
<dbReference type="InterPro" id="IPR003716">
    <property type="entry name" value="DNA-dir_RNA_pol_omega"/>
</dbReference>
<dbReference type="InterPro" id="IPR006110">
    <property type="entry name" value="Pol_omega/Rpo6/RPB6"/>
</dbReference>
<dbReference type="InterPro" id="IPR036161">
    <property type="entry name" value="RPB6/omega-like_sf"/>
</dbReference>
<dbReference type="NCBIfam" id="TIGR00690">
    <property type="entry name" value="rpoZ"/>
    <property type="match status" value="1"/>
</dbReference>
<dbReference type="PANTHER" id="PTHR34476">
    <property type="entry name" value="DNA-DIRECTED RNA POLYMERASE SUBUNIT OMEGA"/>
    <property type="match status" value="1"/>
</dbReference>
<dbReference type="PANTHER" id="PTHR34476:SF1">
    <property type="entry name" value="DNA-DIRECTED RNA POLYMERASE SUBUNIT OMEGA"/>
    <property type="match status" value="1"/>
</dbReference>
<dbReference type="Pfam" id="PF01192">
    <property type="entry name" value="RNA_pol_Rpb6"/>
    <property type="match status" value="1"/>
</dbReference>
<dbReference type="SMART" id="SM01409">
    <property type="entry name" value="RNA_pol_Rpb6"/>
    <property type="match status" value="1"/>
</dbReference>
<dbReference type="SUPFAM" id="SSF63562">
    <property type="entry name" value="RPB6/omega subunit-like"/>
    <property type="match status" value="1"/>
</dbReference>
<feature type="chain" id="PRO_1000194785" description="DNA-directed RNA polymerase subunit omega">
    <location>
        <begin position="1"/>
        <end position="119"/>
    </location>
</feature>
<accession>B8H618</accession>
<reference key="1">
    <citation type="journal article" date="2010" name="J. Bacteriol.">
        <title>The genetic basis of laboratory adaptation in Caulobacter crescentus.</title>
        <authorList>
            <person name="Marks M.E."/>
            <person name="Castro-Rojas C.M."/>
            <person name="Teiling C."/>
            <person name="Du L."/>
            <person name="Kapatral V."/>
            <person name="Walunas T.L."/>
            <person name="Crosson S."/>
        </authorList>
    </citation>
    <scope>NUCLEOTIDE SEQUENCE [LARGE SCALE GENOMIC DNA]</scope>
    <source>
        <strain>NA1000 / CB15N</strain>
    </source>
</reference>
<organism>
    <name type="scientific">Caulobacter vibrioides (strain NA1000 / CB15N)</name>
    <name type="common">Caulobacter crescentus</name>
    <dbReference type="NCBI Taxonomy" id="565050"/>
    <lineage>
        <taxon>Bacteria</taxon>
        <taxon>Pseudomonadati</taxon>
        <taxon>Pseudomonadota</taxon>
        <taxon>Alphaproteobacteria</taxon>
        <taxon>Caulobacterales</taxon>
        <taxon>Caulobacteraceae</taxon>
        <taxon>Caulobacter</taxon>
    </lineage>
</organism>
<proteinExistence type="evidence at protein level"/>
<protein>
    <recommendedName>
        <fullName evidence="1">DNA-directed RNA polymerase subunit omega</fullName>
        <shortName evidence="1">RNAP omega subunit</shortName>
        <ecNumber evidence="1">2.7.7.6</ecNumber>
    </recommendedName>
    <alternativeName>
        <fullName evidence="1">RNA polymerase omega subunit</fullName>
    </alternativeName>
    <alternativeName>
        <fullName evidence="1">Transcriptase subunit omega</fullName>
    </alternativeName>
</protein>
<sequence length="119" mass="13272">MARVTVEDCVEKVPNRFALVLLSAHRARGISAGAALMVDRDNDKNPVVALREIADDVIDHEGLKEHLISTLQRVDEHTEAEEEAETLALLADPSHMQMSELELVRALQSDRDGGQEERY</sequence>
<gene>
    <name evidence="1" type="primary">rpoZ</name>
    <name type="ordered locus">CCNA_01621</name>
</gene>
<comment type="function">
    <text evidence="1">Promotes RNA polymerase assembly. Latches the N- and C-terminal regions of the beta' subunit thereby facilitating its interaction with the beta and alpha subunits.</text>
</comment>
<comment type="catalytic activity">
    <reaction evidence="1">
        <text>RNA(n) + a ribonucleoside 5'-triphosphate = RNA(n+1) + diphosphate</text>
        <dbReference type="Rhea" id="RHEA:21248"/>
        <dbReference type="Rhea" id="RHEA-COMP:14527"/>
        <dbReference type="Rhea" id="RHEA-COMP:17342"/>
        <dbReference type="ChEBI" id="CHEBI:33019"/>
        <dbReference type="ChEBI" id="CHEBI:61557"/>
        <dbReference type="ChEBI" id="CHEBI:140395"/>
        <dbReference type="EC" id="2.7.7.6"/>
    </reaction>
</comment>
<comment type="subunit">
    <text evidence="1">The RNAP catalytic core consists of 2 alpha, 1 beta, 1 beta' and 1 omega subunit. When a sigma factor is associated with the core the holoenzyme is formed, which can initiate transcription.</text>
</comment>
<comment type="similarity">
    <text evidence="1">Belongs to the RNA polymerase subunit omega family.</text>
</comment>
<name>RPOZ_CAUVN</name>